<protein>
    <recommendedName>
        <fullName evidence="1">Proteasome-activating nucleotidase</fullName>
        <shortName evidence="1">PAN</shortName>
    </recommendedName>
    <alternativeName>
        <fullName evidence="1">Proteasomal ATPase</fullName>
    </alternativeName>
    <alternativeName>
        <fullName evidence="1">Proteasome regulatory ATPase</fullName>
    </alternativeName>
    <alternativeName>
        <fullName evidence="1">Proteasome regulatory particle</fullName>
    </alternativeName>
</protein>
<reference key="1">
    <citation type="journal article" date="2009" name="Proc. Natl. Acad. Sci. U.S.A.">
        <title>Biogeography of the Sulfolobus islandicus pan-genome.</title>
        <authorList>
            <person name="Reno M.L."/>
            <person name="Held N.L."/>
            <person name="Fields C.J."/>
            <person name="Burke P.V."/>
            <person name="Whitaker R.J."/>
        </authorList>
    </citation>
    <scope>NUCLEOTIDE SEQUENCE [LARGE SCALE GENOMIC DNA]</scope>
    <source>
        <strain>M.16.4 / Kamchatka #3</strain>
    </source>
</reference>
<keyword id="KW-0067">ATP-binding</keyword>
<keyword id="KW-0143">Chaperone</keyword>
<keyword id="KW-0175">Coiled coil</keyword>
<keyword id="KW-0963">Cytoplasm</keyword>
<keyword id="KW-0547">Nucleotide-binding</keyword>
<keyword id="KW-0647">Proteasome</keyword>
<comment type="function">
    <text evidence="1">ATPase which is responsible for recognizing, binding, unfolding and translocation of substrate proteins into the archaeal 20S proteasome core particle. Is essential for opening the gate of the 20S proteasome via an interaction with its C-terminus, thereby allowing substrate entry and access to the site of proteolysis. Thus, the C-termini of the proteasomal ATPase function like a 'key in a lock' to induce gate opening and therefore regulate proteolysis. Unfolding activity requires energy from ATP hydrolysis, whereas ATP binding alone promotes ATPase-20S proteasome association which triggers gate opening, and supports translocation of unfolded substrates.</text>
</comment>
<comment type="subunit">
    <text evidence="1">Homohexamer. The hexameric complex has a two-ring architecture resembling a top hat that caps the 20S proteasome core at one or both ends. Upon ATP-binding, the C-terminus of PAN interacts with the alpha-rings of the proteasome core by binding to the intersubunit pockets.</text>
</comment>
<comment type="subcellular location">
    <subcellularLocation>
        <location evidence="1">Cytoplasm</location>
    </subcellularLocation>
</comment>
<comment type="domain">
    <text evidence="1">Consists of three main regions, an N-terminal coiled-coil domain that may assist in substrate recognition, an interdomain involved in PAN hexamerization, and a C-terminal ATPase domain of the AAA type.</text>
</comment>
<comment type="similarity">
    <text evidence="1">Belongs to the AAA ATPase family.</text>
</comment>
<sequence length="393" mass="44020">MSGDFDTIRDASSSDEVQLVRLLEEKIKSLQIEIENLRKELNYYKAEMEKMLSPPLIEAVVLDVLPDGRVLVRSSSGPNLVVNVASHIDQKLIKPGVSVALNQRGSTILEVLPQKEDPIVKTMEIVEKPNVTYSEIGGLEEQIKELREVVELPLKKPEIFREIGVEPPKGVLLYGPPGTGKTMLAKAVATESNAVFIHVVASEFAQKFVGEGARIVRELFEMAKRKAPSIIFIDEIDAIGAKRIDIGTSGEREIQRTLMQLLAELDGFNPLDNVKIIAATNRIDILDPALLRPGRFDRIIEVPLPDFRGRTEIFNIYLKKMKVEDNINLELLSQLSEGFSGADIKNVCVEAAYMAIRDGRNKVTMKDLVDAITKINVKRNNMESMKERREKYS</sequence>
<dbReference type="EMBL" id="CP001402">
    <property type="protein sequence ID" value="ACR42480.1"/>
    <property type="molecule type" value="Genomic_DNA"/>
</dbReference>
<dbReference type="RefSeq" id="WP_012711834.1">
    <property type="nucleotide sequence ID" value="NC_012726.1"/>
</dbReference>
<dbReference type="SMR" id="C4KIR6"/>
<dbReference type="KEGG" id="sid:M164_1877"/>
<dbReference type="HOGENOM" id="CLU_000688_2_0_2"/>
<dbReference type="Proteomes" id="UP000001479">
    <property type="component" value="Chromosome"/>
</dbReference>
<dbReference type="GO" id="GO:0005737">
    <property type="term" value="C:cytoplasm"/>
    <property type="evidence" value="ECO:0007669"/>
    <property type="project" value="UniProtKB-SubCell"/>
</dbReference>
<dbReference type="GO" id="GO:0022623">
    <property type="term" value="C:proteasome-activating nucleotidase complex"/>
    <property type="evidence" value="ECO:0007669"/>
    <property type="project" value="UniProtKB-UniRule"/>
</dbReference>
<dbReference type="GO" id="GO:0005524">
    <property type="term" value="F:ATP binding"/>
    <property type="evidence" value="ECO:0007669"/>
    <property type="project" value="UniProtKB-UniRule"/>
</dbReference>
<dbReference type="GO" id="GO:0016887">
    <property type="term" value="F:ATP hydrolysis activity"/>
    <property type="evidence" value="ECO:0007669"/>
    <property type="project" value="UniProtKB-UniRule"/>
</dbReference>
<dbReference type="GO" id="GO:0010498">
    <property type="term" value="P:proteasomal protein catabolic process"/>
    <property type="evidence" value="ECO:0007669"/>
    <property type="project" value="UniProtKB-UniRule"/>
</dbReference>
<dbReference type="GO" id="GO:0043335">
    <property type="term" value="P:protein unfolding"/>
    <property type="evidence" value="ECO:0007669"/>
    <property type="project" value="UniProtKB-UniRule"/>
</dbReference>
<dbReference type="CDD" id="cd19502">
    <property type="entry name" value="RecA-like_PAN_like"/>
    <property type="match status" value="1"/>
</dbReference>
<dbReference type="FunFam" id="3.40.50.300:FF:000033">
    <property type="entry name" value="26S protease regulatory subunit 6B"/>
    <property type="match status" value="1"/>
</dbReference>
<dbReference type="FunFam" id="1.10.8.60:FF:000001">
    <property type="entry name" value="ATP-dependent zinc metalloprotease FtsH"/>
    <property type="match status" value="1"/>
</dbReference>
<dbReference type="Gene3D" id="1.10.8.60">
    <property type="match status" value="1"/>
</dbReference>
<dbReference type="Gene3D" id="2.40.50.140">
    <property type="entry name" value="Nucleic acid-binding proteins"/>
    <property type="match status" value="1"/>
</dbReference>
<dbReference type="Gene3D" id="3.40.50.300">
    <property type="entry name" value="P-loop containing nucleotide triphosphate hydrolases"/>
    <property type="match status" value="1"/>
</dbReference>
<dbReference type="HAMAP" id="MF_00553">
    <property type="entry name" value="PAN"/>
    <property type="match status" value="1"/>
</dbReference>
<dbReference type="InterPro" id="IPR050221">
    <property type="entry name" value="26S_Proteasome_ATPase"/>
</dbReference>
<dbReference type="InterPro" id="IPR003593">
    <property type="entry name" value="AAA+_ATPase"/>
</dbReference>
<dbReference type="InterPro" id="IPR041569">
    <property type="entry name" value="AAA_lid_3"/>
</dbReference>
<dbReference type="InterPro" id="IPR003959">
    <property type="entry name" value="ATPase_AAA_core"/>
</dbReference>
<dbReference type="InterPro" id="IPR003960">
    <property type="entry name" value="ATPase_AAA_CS"/>
</dbReference>
<dbReference type="InterPro" id="IPR012340">
    <property type="entry name" value="NA-bd_OB-fold"/>
</dbReference>
<dbReference type="InterPro" id="IPR023501">
    <property type="entry name" value="Nucleotidase_PAN"/>
</dbReference>
<dbReference type="InterPro" id="IPR027417">
    <property type="entry name" value="P-loop_NTPase"/>
</dbReference>
<dbReference type="InterPro" id="IPR032501">
    <property type="entry name" value="Prot_ATP_ID_OB_2nd"/>
</dbReference>
<dbReference type="NCBIfam" id="NF003069">
    <property type="entry name" value="PRK03992.1"/>
    <property type="match status" value="1"/>
</dbReference>
<dbReference type="NCBIfam" id="TIGR01242">
    <property type="entry name" value="proteasome-activating nucleotidase"/>
    <property type="match status" value="1"/>
</dbReference>
<dbReference type="PANTHER" id="PTHR23073">
    <property type="entry name" value="26S PROTEASOME REGULATORY SUBUNIT"/>
    <property type="match status" value="1"/>
</dbReference>
<dbReference type="Pfam" id="PF00004">
    <property type="entry name" value="AAA"/>
    <property type="match status" value="1"/>
</dbReference>
<dbReference type="Pfam" id="PF17862">
    <property type="entry name" value="AAA_lid_3"/>
    <property type="match status" value="1"/>
</dbReference>
<dbReference type="Pfam" id="PF16450">
    <property type="entry name" value="Prot_ATP_ID_OB_C"/>
    <property type="match status" value="1"/>
</dbReference>
<dbReference type="SMART" id="SM00382">
    <property type="entry name" value="AAA"/>
    <property type="match status" value="1"/>
</dbReference>
<dbReference type="SUPFAM" id="SSF52540">
    <property type="entry name" value="P-loop containing nucleoside triphosphate hydrolases"/>
    <property type="match status" value="1"/>
</dbReference>
<dbReference type="PROSITE" id="PS00674">
    <property type="entry name" value="AAA"/>
    <property type="match status" value="1"/>
</dbReference>
<feature type="chain" id="PRO_1000212005" description="Proteasome-activating nucleotidase">
    <location>
        <begin position="1"/>
        <end position="393"/>
    </location>
</feature>
<feature type="region of interest" description="Docks into pockets in the proteasome alpha-ring to cause gate opening" evidence="1">
    <location>
        <begin position="391"/>
        <end position="393"/>
    </location>
</feature>
<feature type="coiled-coil region" evidence="1">
    <location>
        <begin position="14"/>
        <end position="53"/>
    </location>
</feature>
<feature type="binding site" evidence="1">
    <location>
        <begin position="178"/>
        <end position="183"/>
    </location>
    <ligand>
        <name>ATP</name>
        <dbReference type="ChEBI" id="CHEBI:30616"/>
    </ligand>
</feature>
<feature type="binding site" evidence="1">
    <location>
        <position position="317"/>
    </location>
    <ligand>
        <name>ATP</name>
        <dbReference type="ChEBI" id="CHEBI:30616"/>
    </ligand>
</feature>
<name>PAN_SACI6</name>
<proteinExistence type="inferred from homology"/>
<organism>
    <name type="scientific">Saccharolobus islandicus (strain M.16.4 / Kamchatka #3)</name>
    <name type="common">Sulfolobus islandicus</name>
    <dbReference type="NCBI Taxonomy" id="426118"/>
    <lineage>
        <taxon>Archaea</taxon>
        <taxon>Thermoproteota</taxon>
        <taxon>Thermoprotei</taxon>
        <taxon>Sulfolobales</taxon>
        <taxon>Sulfolobaceae</taxon>
        <taxon>Saccharolobus</taxon>
    </lineage>
</organism>
<gene>
    <name evidence="1" type="primary">pan</name>
    <name type="ordered locus">M164_1877</name>
</gene>
<accession>C4KIR6</accession>
<evidence type="ECO:0000255" key="1">
    <source>
        <dbReference type="HAMAP-Rule" id="MF_00553"/>
    </source>
</evidence>